<evidence type="ECO:0000250" key="1"/>
<evidence type="ECO:0000255" key="2"/>
<evidence type="ECO:0000305" key="3"/>
<name>GT15_ORYSJ</name>
<reference key="1">
    <citation type="journal article" date="2002" name="Nature">
        <title>The genome sequence and structure of rice chromosome 1.</title>
        <authorList>
            <person name="Sasaki T."/>
            <person name="Matsumoto T."/>
            <person name="Yamamoto K."/>
            <person name="Sakata K."/>
            <person name="Baba T."/>
            <person name="Katayose Y."/>
            <person name="Wu J."/>
            <person name="Niimura Y."/>
            <person name="Cheng Z."/>
            <person name="Nagamura Y."/>
            <person name="Antonio B.A."/>
            <person name="Kanamori H."/>
            <person name="Hosokawa S."/>
            <person name="Masukawa M."/>
            <person name="Arikawa K."/>
            <person name="Chiden Y."/>
            <person name="Hayashi M."/>
            <person name="Okamoto M."/>
            <person name="Ando T."/>
            <person name="Aoki H."/>
            <person name="Arita K."/>
            <person name="Hamada M."/>
            <person name="Harada C."/>
            <person name="Hijishita S."/>
            <person name="Honda M."/>
            <person name="Ichikawa Y."/>
            <person name="Idonuma A."/>
            <person name="Iijima M."/>
            <person name="Ikeda M."/>
            <person name="Ikeno M."/>
            <person name="Ito S."/>
            <person name="Ito T."/>
            <person name="Ito Y."/>
            <person name="Ito Y."/>
            <person name="Iwabuchi A."/>
            <person name="Kamiya K."/>
            <person name="Karasawa W."/>
            <person name="Katagiri S."/>
            <person name="Kikuta A."/>
            <person name="Kobayashi N."/>
            <person name="Kono I."/>
            <person name="Machita K."/>
            <person name="Maehara T."/>
            <person name="Mizuno H."/>
            <person name="Mizubayashi T."/>
            <person name="Mukai Y."/>
            <person name="Nagasaki H."/>
            <person name="Nakashima M."/>
            <person name="Nakama Y."/>
            <person name="Nakamichi Y."/>
            <person name="Nakamura M."/>
            <person name="Namiki N."/>
            <person name="Negishi M."/>
            <person name="Ohta I."/>
            <person name="Ono N."/>
            <person name="Saji S."/>
            <person name="Sakai K."/>
            <person name="Shibata M."/>
            <person name="Shimokawa T."/>
            <person name="Shomura A."/>
            <person name="Song J."/>
            <person name="Takazaki Y."/>
            <person name="Terasawa K."/>
            <person name="Tsuji K."/>
            <person name="Waki K."/>
            <person name="Yamagata H."/>
            <person name="Yamane H."/>
            <person name="Yoshiki S."/>
            <person name="Yoshihara R."/>
            <person name="Yukawa K."/>
            <person name="Zhong H."/>
            <person name="Iwama H."/>
            <person name="Endo T."/>
            <person name="Ito H."/>
            <person name="Hahn J.H."/>
            <person name="Kim H.-I."/>
            <person name="Eun M.-Y."/>
            <person name="Yano M."/>
            <person name="Jiang J."/>
            <person name="Gojobori T."/>
        </authorList>
    </citation>
    <scope>NUCLEOTIDE SEQUENCE [LARGE SCALE GENOMIC DNA]</scope>
    <source>
        <strain>cv. Nipponbare</strain>
    </source>
</reference>
<reference key="2">
    <citation type="journal article" date="2005" name="Nature">
        <title>The map-based sequence of the rice genome.</title>
        <authorList>
            <consortium name="International rice genome sequencing project (IRGSP)"/>
        </authorList>
    </citation>
    <scope>NUCLEOTIDE SEQUENCE [LARGE SCALE GENOMIC DNA]</scope>
    <source>
        <strain>cv. Nipponbare</strain>
    </source>
</reference>
<reference key="3">
    <citation type="journal article" date="2008" name="Nucleic Acids Res.">
        <title>The rice annotation project database (RAP-DB): 2008 update.</title>
        <authorList>
            <consortium name="The rice annotation project (RAP)"/>
        </authorList>
    </citation>
    <scope>GENOME REANNOTATION</scope>
    <source>
        <strain>cv. Nipponbare</strain>
    </source>
</reference>
<reference key="4">
    <citation type="journal article" date="2013" name="Rice">
        <title>Improvement of the Oryza sativa Nipponbare reference genome using next generation sequence and optical map data.</title>
        <authorList>
            <person name="Kawahara Y."/>
            <person name="de la Bastide M."/>
            <person name="Hamilton J.P."/>
            <person name="Kanamori H."/>
            <person name="McCombie W.R."/>
            <person name="Ouyang S."/>
            <person name="Schwartz D.C."/>
            <person name="Tanaka T."/>
            <person name="Wu J."/>
            <person name="Zhou S."/>
            <person name="Childs K.L."/>
            <person name="Davidson R.M."/>
            <person name="Lin H."/>
            <person name="Quesada-Ocampo L."/>
            <person name="Vaillancourt B."/>
            <person name="Sakai H."/>
            <person name="Lee S.S."/>
            <person name="Kim J."/>
            <person name="Numa H."/>
            <person name="Itoh T."/>
            <person name="Buell C.R."/>
            <person name="Matsumoto T."/>
        </authorList>
    </citation>
    <scope>GENOME REANNOTATION</scope>
    <source>
        <strain>cv. Nipponbare</strain>
    </source>
</reference>
<reference key="5">
    <citation type="journal article" date="2005" name="PLoS Biol.">
        <title>The genomes of Oryza sativa: a history of duplications.</title>
        <authorList>
            <person name="Yu J."/>
            <person name="Wang J."/>
            <person name="Lin W."/>
            <person name="Li S."/>
            <person name="Li H."/>
            <person name="Zhou J."/>
            <person name="Ni P."/>
            <person name="Dong W."/>
            <person name="Hu S."/>
            <person name="Zeng C."/>
            <person name="Zhang J."/>
            <person name="Zhang Y."/>
            <person name="Li R."/>
            <person name="Xu Z."/>
            <person name="Li S."/>
            <person name="Li X."/>
            <person name="Zheng H."/>
            <person name="Cong L."/>
            <person name="Lin L."/>
            <person name="Yin J."/>
            <person name="Geng J."/>
            <person name="Li G."/>
            <person name="Shi J."/>
            <person name="Liu J."/>
            <person name="Lv H."/>
            <person name="Li J."/>
            <person name="Wang J."/>
            <person name="Deng Y."/>
            <person name="Ran L."/>
            <person name="Shi X."/>
            <person name="Wang X."/>
            <person name="Wu Q."/>
            <person name="Li C."/>
            <person name="Ren X."/>
            <person name="Wang J."/>
            <person name="Wang X."/>
            <person name="Li D."/>
            <person name="Liu D."/>
            <person name="Zhang X."/>
            <person name="Ji Z."/>
            <person name="Zhao W."/>
            <person name="Sun Y."/>
            <person name="Zhang Z."/>
            <person name="Bao J."/>
            <person name="Han Y."/>
            <person name="Dong L."/>
            <person name="Ji J."/>
            <person name="Chen P."/>
            <person name="Wu S."/>
            <person name="Liu J."/>
            <person name="Xiao Y."/>
            <person name="Bu D."/>
            <person name="Tan J."/>
            <person name="Yang L."/>
            <person name="Ye C."/>
            <person name="Zhang J."/>
            <person name="Xu J."/>
            <person name="Zhou Y."/>
            <person name="Yu Y."/>
            <person name="Zhang B."/>
            <person name="Zhuang S."/>
            <person name="Wei H."/>
            <person name="Liu B."/>
            <person name="Lei M."/>
            <person name="Yu H."/>
            <person name="Li Y."/>
            <person name="Xu H."/>
            <person name="Wei S."/>
            <person name="He X."/>
            <person name="Fang L."/>
            <person name="Zhang Z."/>
            <person name="Zhang Y."/>
            <person name="Huang X."/>
            <person name="Su Z."/>
            <person name="Tong W."/>
            <person name="Li J."/>
            <person name="Tong Z."/>
            <person name="Li S."/>
            <person name="Ye J."/>
            <person name="Wang L."/>
            <person name="Fang L."/>
            <person name="Lei T."/>
            <person name="Chen C.-S."/>
            <person name="Chen H.-C."/>
            <person name="Xu Z."/>
            <person name="Li H."/>
            <person name="Huang H."/>
            <person name="Zhang F."/>
            <person name="Xu H."/>
            <person name="Li N."/>
            <person name="Zhao C."/>
            <person name="Li S."/>
            <person name="Dong L."/>
            <person name="Huang Y."/>
            <person name="Li L."/>
            <person name="Xi Y."/>
            <person name="Qi Q."/>
            <person name="Li W."/>
            <person name="Zhang B."/>
            <person name="Hu W."/>
            <person name="Zhang Y."/>
            <person name="Tian X."/>
            <person name="Jiao Y."/>
            <person name="Liang X."/>
            <person name="Jin J."/>
            <person name="Gao L."/>
            <person name="Zheng W."/>
            <person name="Hao B."/>
            <person name="Liu S.-M."/>
            <person name="Wang W."/>
            <person name="Yuan L."/>
            <person name="Cao M."/>
            <person name="McDermott J."/>
            <person name="Samudrala R."/>
            <person name="Wang J."/>
            <person name="Wong G.K.-S."/>
            <person name="Yang H."/>
        </authorList>
    </citation>
    <scope>NUCLEOTIDE SEQUENCE [LARGE SCALE GENOMIC DNA]</scope>
    <source>
        <strain>cv. Nipponbare</strain>
    </source>
</reference>
<protein>
    <recommendedName>
        <fullName>Probable glucuronosyltransferase Os01g0926700</fullName>
        <ecNumber>2.4.-.-</ecNumber>
    </recommendedName>
</protein>
<dbReference type="EC" id="2.4.-.-"/>
<dbReference type="EMBL" id="AP003262">
    <property type="protein sequence ID" value="BAB89670.1"/>
    <property type="molecule type" value="Genomic_DNA"/>
</dbReference>
<dbReference type="EMBL" id="AP004332">
    <property type="protein sequence ID" value="BAB92893.1"/>
    <property type="molecule type" value="Genomic_DNA"/>
</dbReference>
<dbReference type="EMBL" id="AP008207">
    <property type="protein sequence ID" value="BAF07178.2"/>
    <property type="status" value="ALT_SEQ"/>
    <property type="molecule type" value="Genomic_DNA"/>
</dbReference>
<dbReference type="EMBL" id="AP014957">
    <property type="status" value="NOT_ANNOTATED_CDS"/>
    <property type="molecule type" value="Genomic_DNA"/>
</dbReference>
<dbReference type="EMBL" id="CM000138">
    <property type="protein sequence ID" value="EAZ14693.1"/>
    <property type="molecule type" value="Genomic_DNA"/>
</dbReference>
<dbReference type="RefSeq" id="XP_015621850.1">
    <property type="nucleotide sequence ID" value="XM_015766364.1"/>
</dbReference>
<dbReference type="FunCoup" id="Q8S1X7">
    <property type="interactions" value="322"/>
</dbReference>
<dbReference type="STRING" id="39947.Q8S1X7"/>
<dbReference type="CAZy" id="GT47">
    <property type="family name" value="Glycosyltransferase Family 47"/>
</dbReference>
<dbReference type="PaxDb" id="39947-Q8S1X7"/>
<dbReference type="EnsemblPlants" id="Os01t0926700-01">
    <property type="protein sequence ID" value="Os01t0926700-01"/>
    <property type="gene ID" value="Os01g0926700"/>
</dbReference>
<dbReference type="Gramene" id="Os01t0926700-01">
    <property type="protein sequence ID" value="Os01t0926700-01"/>
    <property type="gene ID" value="Os01g0926700"/>
</dbReference>
<dbReference type="KEGG" id="dosa:Os01g0926700"/>
<dbReference type="eggNOG" id="KOG1021">
    <property type="taxonomic scope" value="Eukaryota"/>
</dbReference>
<dbReference type="InParanoid" id="Q8S1X7"/>
<dbReference type="OrthoDB" id="1924787at2759"/>
<dbReference type="Proteomes" id="UP000000763">
    <property type="component" value="Chromosome 1"/>
</dbReference>
<dbReference type="Proteomes" id="UP000007752">
    <property type="component" value="Chromosome 1"/>
</dbReference>
<dbReference type="Proteomes" id="UP000059680">
    <property type="component" value="Chromosome 1"/>
</dbReference>
<dbReference type="GO" id="GO:0000139">
    <property type="term" value="C:Golgi membrane"/>
    <property type="evidence" value="ECO:0007669"/>
    <property type="project" value="UniProtKB-SubCell"/>
</dbReference>
<dbReference type="GO" id="GO:0016757">
    <property type="term" value="F:glycosyltransferase activity"/>
    <property type="evidence" value="ECO:0007669"/>
    <property type="project" value="UniProtKB-KW"/>
</dbReference>
<dbReference type="GO" id="GO:0071555">
    <property type="term" value="P:cell wall organization"/>
    <property type="evidence" value="ECO:0007669"/>
    <property type="project" value="UniProtKB-KW"/>
</dbReference>
<dbReference type="GO" id="GO:0010417">
    <property type="term" value="P:glucuronoxylan biosynthetic process"/>
    <property type="evidence" value="ECO:0000318"/>
    <property type="project" value="GO_Central"/>
</dbReference>
<dbReference type="GO" id="GO:0009834">
    <property type="term" value="P:plant-type secondary cell wall biogenesis"/>
    <property type="evidence" value="ECO:0000318"/>
    <property type="project" value="GO_Central"/>
</dbReference>
<dbReference type="GO" id="GO:0006486">
    <property type="term" value="P:protein glycosylation"/>
    <property type="evidence" value="ECO:0007669"/>
    <property type="project" value="InterPro"/>
</dbReference>
<dbReference type="InterPro" id="IPR004263">
    <property type="entry name" value="Exostosin"/>
</dbReference>
<dbReference type="InterPro" id="IPR040911">
    <property type="entry name" value="Exostosin_GT47"/>
</dbReference>
<dbReference type="PANTHER" id="PTHR11062:SF200">
    <property type="entry name" value="BETA-1,4-XYLOSYLTRANSFERASE IRX10L-RELATED"/>
    <property type="match status" value="1"/>
</dbReference>
<dbReference type="PANTHER" id="PTHR11062">
    <property type="entry name" value="EXOSTOSIN HEPARAN SULFATE GLYCOSYLTRANSFERASE -RELATED"/>
    <property type="match status" value="1"/>
</dbReference>
<dbReference type="Pfam" id="PF03016">
    <property type="entry name" value="Exostosin_GT47"/>
    <property type="match status" value="1"/>
</dbReference>
<accession>Q8S1X7</accession>
<accession>Q0JGF0</accession>
<proteinExistence type="inferred from homology"/>
<gene>
    <name type="ordered locus">Os01g0926700</name>
    <name type="ordered locus">LOC_Os01g70200</name>
    <name type="ORF">OsJ_04618</name>
    <name type="ORF">OSJNBa0093F16.20</name>
    <name type="ORF">P0482D04.17</name>
</gene>
<keyword id="KW-0961">Cell wall biogenesis/degradation</keyword>
<keyword id="KW-0325">Glycoprotein</keyword>
<keyword id="KW-0328">Glycosyltransferase</keyword>
<keyword id="KW-0333">Golgi apparatus</keyword>
<keyword id="KW-0472">Membrane</keyword>
<keyword id="KW-1185">Reference proteome</keyword>
<keyword id="KW-0735">Signal-anchor</keyword>
<keyword id="KW-0808">Transferase</keyword>
<keyword id="KW-0812">Transmembrane</keyword>
<keyword id="KW-1133">Transmembrane helix</keyword>
<sequence length="417" mass="47064">MRRWVLAIAILAAAVCFFLGAQAQEVRQGHQTERISGSAGDVLEDDPVGRLKVYVYDLPSKYNKKLLKKDPRCLNHMFAAEIFMHRFLLSSAVRTFNPEEADWFYTPVYTTCDLTPSGLPLPFKSPRMMRSAIELIATNWPYWNRSEGADHFFVTPHDFGACFHYQEEKAIGRGILPLLQRATLVQTFGQKNHVCLKDGSITIPPYAPPQKMQAHLIPPDTPRSIFVYFRGLFYDTSNDPEGGYYARGARASVWENFKNNPLFDISTDHPPTYYEDMQRSVFCLCPLGWAPWSPRLVEAVVFGCIPVIIADDIVLPFADAIPWEEIGVFVAEEDVPKLDSILTSIPTDVILRKQRLLANPSMKQAMLFPQPAQAGDAFHQILNGLARKLPHGENVFLKPGERALNWTAGPVGDLKPW</sequence>
<organism>
    <name type="scientific">Oryza sativa subsp. japonica</name>
    <name type="common">Rice</name>
    <dbReference type="NCBI Taxonomy" id="39947"/>
    <lineage>
        <taxon>Eukaryota</taxon>
        <taxon>Viridiplantae</taxon>
        <taxon>Streptophyta</taxon>
        <taxon>Embryophyta</taxon>
        <taxon>Tracheophyta</taxon>
        <taxon>Spermatophyta</taxon>
        <taxon>Magnoliopsida</taxon>
        <taxon>Liliopsida</taxon>
        <taxon>Poales</taxon>
        <taxon>Poaceae</taxon>
        <taxon>BOP clade</taxon>
        <taxon>Oryzoideae</taxon>
        <taxon>Oryzeae</taxon>
        <taxon>Oryzinae</taxon>
        <taxon>Oryza</taxon>
        <taxon>Oryza sativa</taxon>
    </lineage>
</organism>
<comment type="function">
    <text evidence="1">Involved in the synthesis of glucuronoxylan hemicellulose in secondary cell walls.</text>
</comment>
<comment type="subcellular location">
    <subcellularLocation>
        <location evidence="1">Golgi apparatus membrane</location>
        <topology evidence="1">Single-pass type II membrane protein</topology>
    </subcellularLocation>
</comment>
<comment type="similarity">
    <text evidence="3">Belongs to the glycosyltransferase 47 family.</text>
</comment>
<comment type="sequence caution" evidence="3">
    <conflict type="erroneous gene model prediction">
        <sequence resource="EMBL-CDS" id="BAF07178"/>
    </conflict>
</comment>
<feature type="chain" id="PRO_0000407569" description="Probable glucuronosyltransferase Os01g0926700">
    <location>
        <begin position="1"/>
        <end position="417"/>
    </location>
</feature>
<feature type="topological domain" description="Cytoplasmic" evidence="2">
    <location>
        <begin position="1"/>
        <end position="3"/>
    </location>
</feature>
<feature type="transmembrane region" description="Helical; Signal-anchor for type II membrane protein" evidence="2">
    <location>
        <begin position="4"/>
        <end position="24"/>
    </location>
</feature>
<feature type="topological domain" description="Lumenal" evidence="2">
    <location>
        <begin position="25"/>
        <end position="417"/>
    </location>
</feature>
<feature type="glycosylation site" description="N-linked (GlcNAc...) asparagine" evidence="2">
    <location>
        <position position="144"/>
    </location>
</feature>
<feature type="glycosylation site" description="N-linked (GlcNAc...) asparagine" evidence="2">
    <location>
        <position position="405"/>
    </location>
</feature>